<gene>
    <name evidence="1" type="primary">gloB</name>
    <name type="ordered locus">cce_1190</name>
</gene>
<proteinExistence type="inferred from homology"/>
<feature type="chain" id="PRO_1000184175" description="Hydroxyacylglutathione hydrolase">
    <location>
        <begin position="1"/>
        <end position="257"/>
    </location>
</feature>
<feature type="binding site" evidence="1">
    <location>
        <position position="54"/>
    </location>
    <ligand>
        <name>Zn(2+)</name>
        <dbReference type="ChEBI" id="CHEBI:29105"/>
        <label>1</label>
    </ligand>
</feature>
<feature type="binding site" evidence="1">
    <location>
        <position position="56"/>
    </location>
    <ligand>
        <name>Zn(2+)</name>
        <dbReference type="ChEBI" id="CHEBI:29105"/>
        <label>1</label>
    </ligand>
</feature>
<feature type="binding site" evidence="1">
    <location>
        <position position="58"/>
    </location>
    <ligand>
        <name>Zn(2+)</name>
        <dbReference type="ChEBI" id="CHEBI:29105"/>
        <label>2</label>
    </ligand>
</feature>
<feature type="binding site" evidence="1">
    <location>
        <position position="59"/>
    </location>
    <ligand>
        <name>Zn(2+)</name>
        <dbReference type="ChEBI" id="CHEBI:29105"/>
        <label>2</label>
    </ligand>
</feature>
<feature type="binding site" evidence="1">
    <location>
        <position position="113"/>
    </location>
    <ligand>
        <name>Zn(2+)</name>
        <dbReference type="ChEBI" id="CHEBI:29105"/>
        <label>1</label>
    </ligand>
</feature>
<feature type="binding site" evidence="1">
    <location>
        <position position="137"/>
    </location>
    <ligand>
        <name>Zn(2+)</name>
        <dbReference type="ChEBI" id="CHEBI:29105"/>
        <label>1</label>
    </ligand>
</feature>
<feature type="binding site" evidence="1">
    <location>
        <position position="137"/>
    </location>
    <ligand>
        <name>Zn(2+)</name>
        <dbReference type="ChEBI" id="CHEBI:29105"/>
        <label>2</label>
    </ligand>
</feature>
<feature type="binding site" evidence="1">
    <location>
        <position position="175"/>
    </location>
    <ligand>
        <name>Zn(2+)</name>
        <dbReference type="ChEBI" id="CHEBI:29105"/>
        <label>2</label>
    </ligand>
</feature>
<name>GLO2_CROS5</name>
<reference key="1">
    <citation type="journal article" date="2008" name="Proc. Natl. Acad. Sci. U.S.A.">
        <title>The genome of Cyanothece 51142, a unicellular diazotrophic cyanobacterium important in the marine nitrogen cycle.</title>
        <authorList>
            <person name="Welsh E.A."/>
            <person name="Liberton M."/>
            <person name="Stoeckel J."/>
            <person name="Loh T."/>
            <person name="Elvitigala T."/>
            <person name="Wang C."/>
            <person name="Wollam A."/>
            <person name="Fulton R.S."/>
            <person name="Clifton S.W."/>
            <person name="Jacobs J.M."/>
            <person name="Aurora R."/>
            <person name="Ghosh B.K."/>
            <person name="Sherman L.A."/>
            <person name="Smith R.D."/>
            <person name="Wilson R.K."/>
            <person name="Pakrasi H.B."/>
        </authorList>
    </citation>
    <scope>NUCLEOTIDE SEQUENCE [LARGE SCALE GENOMIC DNA]</scope>
    <source>
        <strain>ATCC 51142 / BH68</strain>
    </source>
</reference>
<accession>B1WUT9</accession>
<protein>
    <recommendedName>
        <fullName evidence="1">Hydroxyacylglutathione hydrolase</fullName>
        <ecNumber evidence="1">3.1.2.6</ecNumber>
    </recommendedName>
    <alternativeName>
        <fullName evidence="1">Glyoxalase II</fullName>
        <shortName evidence="1">Glx II</shortName>
    </alternativeName>
</protein>
<organism>
    <name type="scientific">Crocosphaera subtropica (strain ATCC 51142 / BH68)</name>
    <name type="common">Cyanothece sp. (strain ATCC 51142)</name>
    <dbReference type="NCBI Taxonomy" id="43989"/>
    <lineage>
        <taxon>Bacteria</taxon>
        <taxon>Bacillati</taxon>
        <taxon>Cyanobacteriota</taxon>
        <taxon>Cyanophyceae</taxon>
        <taxon>Oscillatoriophycideae</taxon>
        <taxon>Chroococcales</taxon>
        <taxon>Aphanothecaceae</taxon>
        <taxon>Crocosphaera</taxon>
        <taxon>Crocosphaera subtropica</taxon>
    </lineage>
</organism>
<sequence>MEIKRLPALSDNYIFLLHDANNNTAAVVDPAVAEPVLNCLDQLGAKLIAIFNTHHHADHVGGNKKLMEQFPDLCVYGSKEDQGRIPGQQVFLEEGDTVEFAGKTGKVYFVPGHTRGHIAYYFPPNENEEIGDLFCGDTIFAGGCGRLFEGTPAQMVESIGKLRNLPDHTRIWCAHEYTLNNLKFAVTVDKDNSDLQIRYQDVIKARKNEEATVPSLLGEEKKTNPFLRWDQPALQMITGMNDPARVFGKIRGMKDNF</sequence>
<comment type="function">
    <text evidence="1">Thiolesterase that catalyzes the hydrolysis of S-D-lactoyl-glutathione to form glutathione and D-lactic acid.</text>
</comment>
<comment type="catalytic activity">
    <reaction evidence="1">
        <text>an S-(2-hydroxyacyl)glutathione + H2O = a 2-hydroxy carboxylate + glutathione + H(+)</text>
        <dbReference type="Rhea" id="RHEA:21864"/>
        <dbReference type="ChEBI" id="CHEBI:15377"/>
        <dbReference type="ChEBI" id="CHEBI:15378"/>
        <dbReference type="ChEBI" id="CHEBI:57925"/>
        <dbReference type="ChEBI" id="CHEBI:58896"/>
        <dbReference type="ChEBI" id="CHEBI:71261"/>
        <dbReference type="EC" id="3.1.2.6"/>
    </reaction>
</comment>
<comment type="cofactor">
    <cofactor evidence="1">
        <name>Zn(2+)</name>
        <dbReference type="ChEBI" id="CHEBI:29105"/>
    </cofactor>
    <text evidence="1">Binds 2 Zn(2+) ions per subunit.</text>
</comment>
<comment type="pathway">
    <text evidence="1">Secondary metabolite metabolism; methylglyoxal degradation; (R)-lactate from methylglyoxal: step 2/2.</text>
</comment>
<comment type="subunit">
    <text evidence="1">Monomer.</text>
</comment>
<comment type="similarity">
    <text evidence="1">Belongs to the metallo-beta-lactamase superfamily. Glyoxalase II family.</text>
</comment>
<dbReference type="EC" id="3.1.2.6" evidence="1"/>
<dbReference type="EMBL" id="CP000806">
    <property type="protein sequence ID" value="ACB50540.1"/>
    <property type="molecule type" value="Genomic_DNA"/>
</dbReference>
<dbReference type="RefSeq" id="WP_009544020.1">
    <property type="nucleotide sequence ID" value="NC_010546.1"/>
</dbReference>
<dbReference type="SMR" id="B1WUT9"/>
<dbReference type="STRING" id="43989.cce_1190"/>
<dbReference type="KEGG" id="cyt:cce_1190"/>
<dbReference type="eggNOG" id="COG0491">
    <property type="taxonomic scope" value="Bacteria"/>
</dbReference>
<dbReference type="HOGENOM" id="CLU_030571_4_1_3"/>
<dbReference type="OrthoDB" id="9802897at2"/>
<dbReference type="UniPathway" id="UPA00619">
    <property type="reaction ID" value="UER00676"/>
</dbReference>
<dbReference type="Proteomes" id="UP000001203">
    <property type="component" value="Chromosome circular"/>
</dbReference>
<dbReference type="GO" id="GO:0004416">
    <property type="term" value="F:hydroxyacylglutathione hydrolase activity"/>
    <property type="evidence" value="ECO:0007669"/>
    <property type="project" value="UniProtKB-UniRule"/>
</dbReference>
<dbReference type="GO" id="GO:0046872">
    <property type="term" value="F:metal ion binding"/>
    <property type="evidence" value="ECO:0007669"/>
    <property type="project" value="UniProtKB-KW"/>
</dbReference>
<dbReference type="GO" id="GO:0019243">
    <property type="term" value="P:methylglyoxal catabolic process to D-lactate via S-lactoyl-glutathione"/>
    <property type="evidence" value="ECO:0007669"/>
    <property type="project" value="InterPro"/>
</dbReference>
<dbReference type="CDD" id="cd07723">
    <property type="entry name" value="hydroxyacylglutathione_hydrolase_MBL-fold"/>
    <property type="match status" value="1"/>
</dbReference>
<dbReference type="Gene3D" id="3.60.15.10">
    <property type="entry name" value="Ribonuclease Z/Hydroxyacylglutathione hydrolase-like"/>
    <property type="match status" value="1"/>
</dbReference>
<dbReference type="HAMAP" id="MF_01374">
    <property type="entry name" value="Glyoxalase_2"/>
    <property type="match status" value="1"/>
</dbReference>
<dbReference type="InterPro" id="IPR035680">
    <property type="entry name" value="Clx_II_MBL"/>
</dbReference>
<dbReference type="InterPro" id="IPR050110">
    <property type="entry name" value="Glyoxalase_II_hydrolase"/>
</dbReference>
<dbReference type="InterPro" id="IPR032282">
    <property type="entry name" value="HAGH_C"/>
</dbReference>
<dbReference type="InterPro" id="IPR017782">
    <property type="entry name" value="Hydroxyacylglutathione_Hdrlase"/>
</dbReference>
<dbReference type="InterPro" id="IPR001279">
    <property type="entry name" value="Metallo-B-lactamas"/>
</dbReference>
<dbReference type="InterPro" id="IPR036866">
    <property type="entry name" value="RibonucZ/Hydroxyglut_hydro"/>
</dbReference>
<dbReference type="NCBIfam" id="TIGR03413">
    <property type="entry name" value="GSH_gloB"/>
    <property type="match status" value="1"/>
</dbReference>
<dbReference type="PANTHER" id="PTHR43705">
    <property type="entry name" value="HYDROXYACYLGLUTATHIONE HYDROLASE"/>
    <property type="match status" value="1"/>
</dbReference>
<dbReference type="PANTHER" id="PTHR43705:SF1">
    <property type="entry name" value="HYDROXYACYLGLUTATHIONE HYDROLASE GLOB"/>
    <property type="match status" value="1"/>
</dbReference>
<dbReference type="Pfam" id="PF16123">
    <property type="entry name" value="HAGH_C"/>
    <property type="match status" value="1"/>
</dbReference>
<dbReference type="Pfam" id="PF00753">
    <property type="entry name" value="Lactamase_B"/>
    <property type="match status" value="1"/>
</dbReference>
<dbReference type="PIRSF" id="PIRSF005457">
    <property type="entry name" value="Glx"/>
    <property type="match status" value="1"/>
</dbReference>
<dbReference type="SMART" id="SM00849">
    <property type="entry name" value="Lactamase_B"/>
    <property type="match status" value="1"/>
</dbReference>
<dbReference type="SUPFAM" id="SSF56281">
    <property type="entry name" value="Metallo-hydrolase/oxidoreductase"/>
    <property type="match status" value="1"/>
</dbReference>
<keyword id="KW-0378">Hydrolase</keyword>
<keyword id="KW-0479">Metal-binding</keyword>
<keyword id="KW-1185">Reference proteome</keyword>
<keyword id="KW-0862">Zinc</keyword>
<evidence type="ECO:0000255" key="1">
    <source>
        <dbReference type="HAMAP-Rule" id="MF_01374"/>
    </source>
</evidence>